<keyword id="KW-0687">Ribonucleoprotein</keyword>
<keyword id="KW-0689">Ribosomal protein</keyword>
<protein>
    <recommendedName>
        <fullName evidence="1">Large ribosomal subunit protein bL12</fullName>
    </recommendedName>
    <alternativeName>
        <fullName evidence="2">50S ribosomal protein L7/L12</fullName>
    </alternativeName>
</protein>
<reference key="1">
    <citation type="journal article" date="2008" name="Proc. Natl. Acad. Sci. U.S.A.">
        <title>The genome sequence of Bifidobacterium longum subsp. infantis reveals adaptations for milk utilization within the infant microbiome.</title>
        <authorList>
            <person name="Sela D.A."/>
            <person name="Chapman J."/>
            <person name="Adeuya A."/>
            <person name="Kim J.H."/>
            <person name="Chen F."/>
            <person name="Whitehead T.R."/>
            <person name="Lapidus A."/>
            <person name="Rokhsar D.S."/>
            <person name="Lebrilla C.B."/>
            <person name="German J.B."/>
            <person name="Price N.P."/>
            <person name="Richardson P.M."/>
            <person name="Mills D.A."/>
        </authorList>
    </citation>
    <scope>NUCLEOTIDE SEQUENCE [LARGE SCALE GENOMIC DNA]</scope>
    <source>
        <strain>ATCC 15697 / DSM 20088 / JCM 1222 / NCTC 11817 / S12</strain>
    </source>
</reference>
<reference key="2">
    <citation type="journal article" date="2011" name="Nature">
        <title>Bifidobacteria can protect from enteropathogenic infection through production of acetate.</title>
        <authorList>
            <person name="Fukuda S."/>
            <person name="Toh H."/>
            <person name="Hase K."/>
            <person name="Oshima K."/>
            <person name="Nakanishi Y."/>
            <person name="Yoshimura K."/>
            <person name="Tobe T."/>
            <person name="Clarke J.M."/>
            <person name="Topping D.L."/>
            <person name="Suzuki T."/>
            <person name="Taylor T.D."/>
            <person name="Itoh K."/>
            <person name="Kikuchi J."/>
            <person name="Morita H."/>
            <person name="Hattori M."/>
            <person name="Ohno H."/>
        </authorList>
    </citation>
    <scope>NUCLEOTIDE SEQUENCE [LARGE SCALE GENOMIC DNA]</scope>
    <source>
        <strain>ATCC 15697 / DSM 20088 / JCM 1222 / NCTC 11817 / S12</strain>
    </source>
</reference>
<organism>
    <name type="scientific">Bifidobacterium longum subsp. infantis (strain ATCC 15697 / DSM 20088 / JCM 1222 / NCTC 11817 / S12)</name>
    <dbReference type="NCBI Taxonomy" id="391904"/>
    <lineage>
        <taxon>Bacteria</taxon>
        <taxon>Bacillati</taxon>
        <taxon>Actinomycetota</taxon>
        <taxon>Actinomycetes</taxon>
        <taxon>Bifidobacteriales</taxon>
        <taxon>Bifidobacteriaceae</taxon>
        <taxon>Bifidobacterium</taxon>
    </lineage>
</organism>
<comment type="function">
    <text evidence="1">Forms part of the ribosomal stalk which helps the ribosome interact with GTP-bound translation factors. Is thus essential for accurate translation.</text>
</comment>
<comment type="subunit">
    <text evidence="1">Homodimer. Part of the ribosomal stalk of the 50S ribosomal subunit. Forms a multimeric L10(L12)X complex, where L10 forms an elongated spine to which 2 to 4 L12 dimers bind in a sequential fashion. Binds GTP-bound translation factors.</text>
</comment>
<comment type="similarity">
    <text evidence="1">Belongs to the bacterial ribosomal protein bL12 family.</text>
</comment>
<proteinExistence type="inferred from homology"/>
<gene>
    <name evidence="1" type="primary">rplL</name>
    <name type="ordered locus">Blon_2266</name>
    <name type="ordered locus">BLIJ_2338</name>
</gene>
<name>RL7_BIFLS</name>
<evidence type="ECO:0000255" key="1">
    <source>
        <dbReference type="HAMAP-Rule" id="MF_00368"/>
    </source>
</evidence>
<evidence type="ECO:0000305" key="2"/>
<feature type="chain" id="PRO_1000195772" description="Large ribosomal subunit protein bL12">
    <location>
        <begin position="1"/>
        <end position="126"/>
    </location>
</feature>
<sequence length="126" mass="13220">MAKYTNDELLEAFGEMTLVELSEFVKAFEEKFDVEAAAPVAAVAAVAGAAAPAEEEKDEFDVILSAVGDKKIQVIKAVRAITSLGLAEAKALVDGAPKAVLEKAKKEDAEKAKAQLEEAGASVELK</sequence>
<accession>B7GNG8</accession>
<accession>E8MNB2</accession>
<dbReference type="EMBL" id="CP001095">
    <property type="protein sequence ID" value="ACJ53324.1"/>
    <property type="molecule type" value="Genomic_DNA"/>
</dbReference>
<dbReference type="EMBL" id="AP010889">
    <property type="protein sequence ID" value="BAJ69915.1"/>
    <property type="molecule type" value="Genomic_DNA"/>
</dbReference>
<dbReference type="RefSeq" id="WP_012578498.1">
    <property type="nucleotide sequence ID" value="NZ_JDTT01000030.1"/>
</dbReference>
<dbReference type="SMR" id="B7GNG8"/>
<dbReference type="KEGG" id="bln:Blon_2266"/>
<dbReference type="KEGG" id="blon:BLIJ_2338"/>
<dbReference type="PATRIC" id="fig|391904.8.peg.2341"/>
<dbReference type="HOGENOM" id="CLU_086499_3_0_11"/>
<dbReference type="Proteomes" id="UP000001360">
    <property type="component" value="Chromosome"/>
</dbReference>
<dbReference type="GO" id="GO:0022625">
    <property type="term" value="C:cytosolic large ribosomal subunit"/>
    <property type="evidence" value="ECO:0007669"/>
    <property type="project" value="TreeGrafter"/>
</dbReference>
<dbReference type="GO" id="GO:0003729">
    <property type="term" value="F:mRNA binding"/>
    <property type="evidence" value="ECO:0007669"/>
    <property type="project" value="TreeGrafter"/>
</dbReference>
<dbReference type="GO" id="GO:0003735">
    <property type="term" value="F:structural constituent of ribosome"/>
    <property type="evidence" value="ECO:0007669"/>
    <property type="project" value="InterPro"/>
</dbReference>
<dbReference type="GO" id="GO:0006412">
    <property type="term" value="P:translation"/>
    <property type="evidence" value="ECO:0007669"/>
    <property type="project" value="UniProtKB-UniRule"/>
</dbReference>
<dbReference type="CDD" id="cd00387">
    <property type="entry name" value="Ribosomal_L7_L12"/>
    <property type="match status" value="1"/>
</dbReference>
<dbReference type="FunFam" id="3.30.1390.10:FF:000001">
    <property type="entry name" value="50S ribosomal protein L7/L12"/>
    <property type="match status" value="1"/>
</dbReference>
<dbReference type="Gene3D" id="3.30.1390.10">
    <property type="match status" value="1"/>
</dbReference>
<dbReference type="Gene3D" id="1.20.5.710">
    <property type="entry name" value="Single helix bin"/>
    <property type="match status" value="1"/>
</dbReference>
<dbReference type="HAMAP" id="MF_00368">
    <property type="entry name" value="Ribosomal_bL12"/>
    <property type="match status" value="1"/>
</dbReference>
<dbReference type="InterPro" id="IPR000206">
    <property type="entry name" value="Ribosomal_bL12"/>
</dbReference>
<dbReference type="InterPro" id="IPR013823">
    <property type="entry name" value="Ribosomal_bL12_C"/>
</dbReference>
<dbReference type="InterPro" id="IPR014719">
    <property type="entry name" value="Ribosomal_bL12_C/ClpS-like"/>
</dbReference>
<dbReference type="InterPro" id="IPR008932">
    <property type="entry name" value="Ribosomal_bL12_oligo"/>
</dbReference>
<dbReference type="InterPro" id="IPR036235">
    <property type="entry name" value="Ribosomal_bL12_oligo_N_sf"/>
</dbReference>
<dbReference type="NCBIfam" id="TIGR00855">
    <property type="entry name" value="L12"/>
    <property type="match status" value="1"/>
</dbReference>
<dbReference type="PANTHER" id="PTHR45987">
    <property type="entry name" value="39S RIBOSOMAL PROTEIN L12"/>
    <property type="match status" value="1"/>
</dbReference>
<dbReference type="PANTHER" id="PTHR45987:SF4">
    <property type="entry name" value="LARGE RIBOSOMAL SUBUNIT PROTEIN BL12M"/>
    <property type="match status" value="1"/>
</dbReference>
<dbReference type="Pfam" id="PF00542">
    <property type="entry name" value="Ribosomal_L12"/>
    <property type="match status" value="1"/>
</dbReference>
<dbReference type="Pfam" id="PF16320">
    <property type="entry name" value="Ribosomal_L12_N"/>
    <property type="match status" value="1"/>
</dbReference>
<dbReference type="SUPFAM" id="SSF54736">
    <property type="entry name" value="ClpS-like"/>
    <property type="match status" value="1"/>
</dbReference>
<dbReference type="SUPFAM" id="SSF48300">
    <property type="entry name" value="Ribosomal protein L7/12, oligomerisation (N-terminal) domain"/>
    <property type="match status" value="1"/>
</dbReference>